<gene>
    <name evidence="2" type="primary">csxB</name>
    <name evidence="3" type="ORF">CLOSPO_03324</name>
</gene>
<feature type="chain" id="PRO_0000441671" description="Exosporium protein B">
    <location>
        <begin position="1"/>
        <end position="151"/>
    </location>
</feature>
<comment type="subcellular location">
    <subcellularLocation>
        <location evidence="1">Spore wall</location>
    </subcellularLocation>
    <text evidence="1">Localizes to the exosporium.</text>
</comment>
<proteinExistence type="evidence at protein level"/>
<dbReference type="EMBL" id="ABKW02000004">
    <property type="protein sequence ID" value="EDU37155.1"/>
    <property type="molecule type" value="Genomic_DNA"/>
</dbReference>
<dbReference type="RefSeq" id="WP_003486263.1">
    <property type="nucleotide sequence ID" value="NZ_DS981517.1"/>
</dbReference>
<dbReference type="HOGENOM" id="CLU_1728151_0_0_9"/>
<dbReference type="GO" id="GO:0043592">
    <property type="term" value="C:exosporium"/>
    <property type="evidence" value="ECO:0000314"/>
    <property type="project" value="UniProtKB"/>
</dbReference>
<organism>
    <name type="scientific">Clostridium sporogenes (strain ATCC 15579)</name>
    <dbReference type="NCBI Taxonomy" id="471871"/>
    <lineage>
        <taxon>Bacteria</taxon>
        <taxon>Bacillati</taxon>
        <taxon>Bacillota</taxon>
        <taxon>Clostridia</taxon>
        <taxon>Eubacteriales</taxon>
        <taxon>Clostridiaceae</taxon>
        <taxon>Clostridium</taxon>
    </lineage>
</organism>
<accession>J7T0S1</accession>
<protein>
    <recommendedName>
        <fullName evidence="2">Exosporium protein B</fullName>
    </recommendedName>
</protein>
<reference key="1">
    <citation type="submission" date="2008-05" db="EMBL/GenBank/DDBJ databases">
        <title>Draft genome sequence of Clostridium sporogenes ATCC 15579.</title>
        <authorList>
            <person name="Sudarsanam P."/>
            <person name="Ley R."/>
            <person name="Guruge J."/>
            <person name="Turnbaugh P.J."/>
            <person name="Mahowald M."/>
            <person name="Liep D."/>
            <person name="Gordon J."/>
            <person name="Fulton L."/>
            <person name="Clifton S."/>
            <person name="Fulton B."/>
            <person name="Xu J."/>
            <person name="Minx P."/>
            <person name="Pepin K.H."/>
            <person name="Johnson M."/>
            <person name="Thiruvilangam P."/>
            <person name="Bhonagiri V."/>
            <person name="Nash W.E."/>
            <person name="Mardis E.R."/>
            <person name="Wilson R.K."/>
        </authorList>
    </citation>
    <scope>NUCLEOTIDE SEQUENCE [LARGE SCALE GENOMIC DNA]</scope>
    <source>
        <strain>ATCC 15579</strain>
    </source>
</reference>
<reference key="2">
    <citation type="journal article" date="2016" name="Food Microbiol.">
        <title>Characterization of the spore surface and exosporium proteins of Clostridium sporogenes; implications for Clostridium botulinum group I strains.</title>
        <authorList>
            <person name="Janganan T.K."/>
            <person name="Mullin N."/>
            <person name="Tzokov S.B."/>
            <person name="Stringer S."/>
            <person name="Fagan R.P."/>
            <person name="Hobbs J.K."/>
            <person name="Moir A."/>
            <person name="Bullough P.A."/>
        </authorList>
    </citation>
    <scope>IDENTIFICATION BY MASS SPECTROMETRY</scope>
    <scope>SUBCELLULAR LOCATION</scope>
    <source>
        <strain>NCIMB 701792</strain>
    </source>
</reference>
<sequence>MSKSSEEKMENKEVLNINSFNISEFCNAEEGSNFIHFKPCEICKRAILDPINVADTSRLLQVNVALRNVCIGKELTVGCILIDRTGTVLAFKSQTFTVGHGGSGCGCSEDKHGSPCTNTSRRFSFILPTRDLCSSMDLKVKIIANYTHPCN</sequence>
<evidence type="ECO:0000269" key="1">
    <source>
    </source>
</evidence>
<evidence type="ECO:0000303" key="2">
    <source>
    </source>
</evidence>
<evidence type="ECO:0000312" key="3">
    <source>
        <dbReference type="EMBL" id="EDU37155.1"/>
    </source>
</evidence>
<name>CSXB_CLOS1</name>